<protein>
    <recommendedName>
        <fullName>Regulation of nuclear pre-mRNA domain-containing protein 1A</fullName>
    </recommendedName>
    <alternativeName>
        <fullName>Cyclin-dependent kinase inhibitor 2B-related protein</fullName>
    </alternativeName>
    <alternativeName>
        <fullName>p15INK4B-related protein</fullName>
    </alternativeName>
</protein>
<gene>
    <name type="primary">RPRD1A</name>
    <name type="synonym">P15RS</name>
    <name type="ORF">RCJMB04_3f10</name>
</gene>
<comment type="function">
    <text evidence="1">Interacts with phosphorylated C-terminal heptapeptide repeat domain (CTD) of the largest RNA polymerase II subunit POLR2A, and participates in dephosphorylation of the CTD by RPAP2. May act as a negative regulator of cyclin-D1 (CCND1) and cyclin-E (CCNE1) in the cell cycle.</text>
</comment>
<comment type="subunit">
    <text evidence="1">May form a heterodimer with RPRD1B. Associates with the RNA polymerase II subunit POLR2A (via CTD phosphorylated at 'Ser-2' and 'Ser-7' of the heptad repeats).</text>
</comment>
<comment type="subcellular location">
    <subcellularLocation>
        <location evidence="1">Nucleus</location>
    </subcellularLocation>
</comment>
<comment type="similarity">
    <text evidence="3">Belongs to the UPF0400 (RTT103) family.</text>
</comment>
<organism>
    <name type="scientific">Gallus gallus</name>
    <name type="common">Chicken</name>
    <dbReference type="NCBI Taxonomy" id="9031"/>
    <lineage>
        <taxon>Eukaryota</taxon>
        <taxon>Metazoa</taxon>
        <taxon>Chordata</taxon>
        <taxon>Craniata</taxon>
        <taxon>Vertebrata</taxon>
        <taxon>Euteleostomi</taxon>
        <taxon>Archelosauria</taxon>
        <taxon>Archosauria</taxon>
        <taxon>Dinosauria</taxon>
        <taxon>Saurischia</taxon>
        <taxon>Theropoda</taxon>
        <taxon>Coelurosauria</taxon>
        <taxon>Aves</taxon>
        <taxon>Neognathae</taxon>
        <taxon>Galloanserae</taxon>
        <taxon>Galliformes</taxon>
        <taxon>Phasianidae</taxon>
        <taxon>Phasianinae</taxon>
        <taxon>Gallus</taxon>
    </lineage>
</organism>
<reference key="1">
    <citation type="journal article" date="2005" name="Genome Biol.">
        <title>Full-length cDNAs from chicken bursal lymphocytes to facilitate gene function analysis.</title>
        <authorList>
            <person name="Caldwell R.B."/>
            <person name="Kierzek A.M."/>
            <person name="Arakawa H."/>
            <person name="Bezzubov Y."/>
            <person name="Zaim J."/>
            <person name="Fiedler P."/>
            <person name="Kutter S."/>
            <person name="Blagodatski A."/>
            <person name="Kostovska D."/>
            <person name="Koter M."/>
            <person name="Plachy J."/>
            <person name="Carninci P."/>
            <person name="Hayashizaki Y."/>
            <person name="Buerstedde J.-M."/>
        </authorList>
    </citation>
    <scope>NUCLEOTIDE SEQUENCE [LARGE SCALE MRNA]</scope>
    <source>
        <strain>CB</strain>
        <tissue>Bursa of Fabricius</tissue>
    </source>
</reference>
<keyword id="KW-0539">Nucleus</keyword>
<keyword id="KW-1185">Reference proteome</keyword>
<dbReference type="EMBL" id="AJ719554">
    <property type="protein sequence ID" value="CAG31213.1"/>
    <property type="molecule type" value="mRNA"/>
</dbReference>
<dbReference type="RefSeq" id="NP_001026176.1">
    <property type="nucleotide sequence ID" value="NM_001031005.2"/>
</dbReference>
<dbReference type="SMR" id="Q5ZM30"/>
<dbReference type="FunCoup" id="Q5ZM30">
    <property type="interactions" value="359"/>
</dbReference>
<dbReference type="STRING" id="9031.ENSGALP00000021401"/>
<dbReference type="PaxDb" id="9031-ENSGALP00000021401"/>
<dbReference type="GeneID" id="420953"/>
<dbReference type="KEGG" id="gga:420953"/>
<dbReference type="CTD" id="55197"/>
<dbReference type="VEuPathDB" id="HostDB:geneid_420953"/>
<dbReference type="eggNOG" id="KOG2669">
    <property type="taxonomic scope" value="Eukaryota"/>
</dbReference>
<dbReference type="InParanoid" id="Q5ZM30"/>
<dbReference type="OrthoDB" id="10069473at2759"/>
<dbReference type="PhylomeDB" id="Q5ZM30"/>
<dbReference type="PRO" id="PR:Q5ZM30"/>
<dbReference type="Proteomes" id="UP000000539">
    <property type="component" value="Unassembled WGS sequence"/>
</dbReference>
<dbReference type="GO" id="GO:0005634">
    <property type="term" value="C:nucleus"/>
    <property type="evidence" value="ECO:0000250"/>
    <property type="project" value="UniProtKB"/>
</dbReference>
<dbReference type="GO" id="GO:0097550">
    <property type="term" value="C:transcription preinitiation complex"/>
    <property type="evidence" value="ECO:0000250"/>
    <property type="project" value="UniProtKB"/>
</dbReference>
<dbReference type="GO" id="GO:0099122">
    <property type="term" value="F:RNA polymerase II C-terminal domain binding"/>
    <property type="evidence" value="ECO:0007669"/>
    <property type="project" value="InterPro"/>
</dbReference>
<dbReference type="GO" id="GO:0000993">
    <property type="term" value="F:RNA polymerase II complex binding"/>
    <property type="evidence" value="ECO:0000318"/>
    <property type="project" value="GO_Central"/>
</dbReference>
<dbReference type="GO" id="GO:0031124">
    <property type="term" value="P:mRNA 3'-end processing"/>
    <property type="evidence" value="ECO:0000318"/>
    <property type="project" value="GO_Central"/>
</dbReference>
<dbReference type="GO" id="GO:0001111">
    <property type="term" value="P:RNA polymerase II promoter clearance"/>
    <property type="evidence" value="ECO:0000250"/>
    <property type="project" value="UniProtKB"/>
</dbReference>
<dbReference type="CDD" id="cd17011">
    <property type="entry name" value="CID_RPRD1A"/>
    <property type="match status" value="1"/>
</dbReference>
<dbReference type="FunFam" id="1.25.40.90:FF:000007">
    <property type="entry name" value="Regulation of nuclear pre-mRNA domain-containing protein 1B"/>
    <property type="match status" value="1"/>
</dbReference>
<dbReference type="Gene3D" id="1.25.40.90">
    <property type="match status" value="1"/>
</dbReference>
<dbReference type="Gene3D" id="6.10.250.2560">
    <property type="match status" value="1"/>
</dbReference>
<dbReference type="InterPro" id="IPR006569">
    <property type="entry name" value="CID_dom"/>
</dbReference>
<dbReference type="InterPro" id="IPR008942">
    <property type="entry name" value="ENTH_VHS"/>
</dbReference>
<dbReference type="InterPro" id="IPR032337">
    <property type="entry name" value="RPRD1A/B_C"/>
</dbReference>
<dbReference type="InterPro" id="IPR047884">
    <property type="entry name" value="RPRD1A_CID"/>
</dbReference>
<dbReference type="PANTHER" id="PTHR12460">
    <property type="entry name" value="CYCLIN-DEPENDENT KINASE INHIBITOR-RELATED PROTEIN"/>
    <property type="match status" value="1"/>
</dbReference>
<dbReference type="PANTHER" id="PTHR12460:SF2">
    <property type="entry name" value="REGULATION OF NUCLEAR PRE-MRNA DOMAIN-CONTAINING PROTEIN 1A"/>
    <property type="match status" value="1"/>
</dbReference>
<dbReference type="Pfam" id="PF04818">
    <property type="entry name" value="CID"/>
    <property type="match status" value="1"/>
</dbReference>
<dbReference type="Pfam" id="PF16566">
    <property type="entry name" value="CREPT"/>
    <property type="match status" value="1"/>
</dbReference>
<dbReference type="SMART" id="SM00582">
    <property type="entry name" value="RPR"/>
    <property type="match status" value="1"/>
</dbReference>
<dbReference type="SUPFAM" id="SSF48464">
    <property type="entry name" value="ENTH/VHS domain"/>
    <property type="match status" value="1"/>
</dbReference>
<dbReference type="PROSITE" id="PS51391">
    <property type="entry name" value="CID"/>
    <property type="match status" value="1"/>
</dbReference>
<evidence type="ECO:0000250" key="1">
    <source>
        <dbReference type="UniProtKB" id="Q96P16"/>
    </source>
</evidence>
<evidence type="ECO:0000255" key="2">
    <source>
        <dbReference type="PROSITE-ProRule" id="PRU00724"/>
    </source>
</evidence>
<evidence type="ECO:0000305" key="3"/>
<accession>Q5ZM30</accession>
<name>RPR1A_CHICK</name>
<proteinExistence type="evidence at transcript level"/>
<feature type="chain" id="PRO_0000311347" description="Regulation of nuclear pre-mRNA domain-containing protein 1A">
    <location>
        <begin position="1"/>
        <end position="268"/>
    </location>
</feature>
<feature type="domain" description="CID" evidence="2">
    <location>
        <begin position="1"/>
        <end position="133"/>
    </location>
</feature>
<sequence length="268" mass="30836">MSAFSEAALERKLSELSNSQQSVQTLSLWLIHHRKHSALIVSVWERELRKAKPNRKLTFLYLANDVIQNSKRKGPEFTKDFAPVIVEAFKHVSSESDESCKKHPGRVLSIWEERSVYENDVLEQLRQALYGDRKVRKRTYEQIKVDENNCSPRSSPTDPPQTMDLIRALQELENAASGDAAVHQRIASLPIEVQDVSLLDRITDKESGEQLSKMVDDACMLLADYNGRLAAEIDDRKQLTRMLSDFLRCQKEFLAEKEHKLEVRIVLF</sequence>